<name>HINT3_DANRE</name>
<keyword id="KW-0963">Cytoplasm</keyword>
<keyword id="KW-0378">Hydrolase</keyword>
<keyword id="KW-0547">Nucleotide-binding</keyword>
<keyword id="KW-0539">Nucleus</keyword>
<keyword id="KW-1185">Reference proteome</keyword>
<feature type="chain" id="PRO_0000324331" description="Adenosine 5'-monophosphoramidase HINT3">
    <location>
        <begin position="1"/>
        <end position="160"/>
    </location>
</feature>
<feature type="domain" description="HIT" evidence="3">
    <location>
        <begin position="24"/>
        <end position="132"/>
    </location>
</feature>
<feature type="short sequence motif" description="Histidine triad motif">
    <location>
        <begin position="117"/>
        <end position="121"/>
    </location>
</feature>
<feature type="active site" description="Tele-AMP-histidine intermediate" evidence="2">
    <location>
        <position position="119"/>
    </location>
</feature>
<feature type="binding site" evidence="1">
    <location>
        <begin position="50"/>
        <end position="51"/>
    </location>
    <ligand>
        <name>AMP</name>
        <dbReference type="ChEBI" id="CHEBI:456215"/>
    </ligand>
</feature>
<feature type="binding site" evidence="1">
    <location>
        <begin position="119"/>
        <end position="121"/>
    </location>
    <ligand>
        <name>AMP</name>
        <dbReference type="ChEBI" id="CHEBI:456215"/>
    </ligand>
</feature>
<feature type="sequence conflict" description="In Ref. 1; CAI11952 and 2; AAI15056." evidence="4" ref="1 2">
    <original>E</original>
    <variation>K</variation>
    <location>
        <position position="17"/>
    </location>
</feature>
<feature type="sequence conflict" description="In Ref. 2; AAI21730." evidence="4" ref="2">
    <original>G</original>
    <variation>A</variation>
    <location>
        <position position="83"/>
    </location>
</feature>
<feature type="sequence conflict" description="In Ref. 2; AAI21730." evidence="4" ref="2">
    <original>H</original>
    <variation>Y</variation>
    <location>
        <position position="121"/>
    </location>
</feature>
<feature type="sequence conflict" description="In Ref. 2; AAI15056." evidence="4" ref="2">
    <original>E</original>
    <variation>G</variation>
    <location>
        <position position="145"/>
    </location>
</feature>
<feature type="sequence conflict" description="In Ref. 2; AAI15056." evidence="4" ref="2">
    <original>T</original>
    <variation>A</variation>
    <location>
        <position position="148"/>
    </location>
</feature>
<dbReference type="EC" id="3.9.1.-" evidence="2"/>
<dbReference type="EMBL" id="BX537272">
    <property type="protein sequence ID" value="CAI29411.1"/>
    <property type="molecule type" value="Genomic_DNA"/>
</dbReference>
<dbReference type="EMBL" id="BX927255">
    <property type="protein sequence ID" value="CAI11952.1"/>
    <property type="molecule type" value="Genomic_DNA"/>
</dbReference>
<dbReference type="EMBL" id="BC115055">
    <property type="protein sequence ID" value="AAI15056.1"/>
    <property type="molecule type" value="mRNA"/>
</dbReference>
<dbReference type="EMBL" id="BC121729">
    <property type="protein sequence ID" value="AAI21730.1"/>
    <property type="molecule type" value="mRNA"/>
</dbReference>
<dbReference type="EMBL" id="BC133849">
    <property type="protein sequence ID" value="AAI33850.1"/>
    <property type="molecule type" value="mRNA"/>
</dbReference>
<dbReference type="RefSeq" id="NP_001020726.2">
    <property type="nucleotide sequence ID" value="NM_001025555.2"/>
</dbReference>
<dbReference type="SMR" id="Q5PNN8"/>
<dbReference type="FunCoup" id="Q5PNN8">
    <property type="interactions" value="910"/>
</dbReference>
<dbReference type="STRING" id="7955.ENSDARP00000072181"/>
<dbReference type="PaxDb" id="7955-ENSDARP00000072181"/>
<dbReference type="Ensembl" id="ENSDART00000077715">
    <property type="protein sequence ID" value="ENSDARP00000072181"/>
    <property type="gene ID" value="ENSDARG00000055365"/>
</dbReference>
<dbReference type="GeneID" id="678527"/>
<dbReference type="KEGG" id="dre:678527"/>
<dbReference type="AGR" id="ZFIN:ZDB-GENE-041001-132"/>
<dbReference type="ZFIN" id="ZDB-GENE-041001-132">
    <property type="gene designation" value="si:dkey-25e12.3"/>
</dbReference>
<dbReference type="eggNOG" id="KOG4359">
    <property type="taxonomic scope" value="Eukaryota"/>
</dbReference>
<dbReference type="HOGENOM" id="CLU_056776_4_2_1"/>
<dbReference type="InParanoid" id="Q5PNN8"/>
<dbReference type="OMA" id="VETCIFC"/>
<dbReference type="OrthoDB" id="1915375at2759"/>
<dbReference type="PhylomeDB" id="Q5PNN8"/>
<dbReference type="TreeFam" id="TF353069"/>
<dbReference type="PRO" id="PR:Q5PNN8"/>
<dbReference type="Proteomes" id="UP000000437">
    <property type="component" value="Alternate scaffold 20"/>
</dbReference>
<dbReference type="Proteomes" id="UP000000437">
    <property type="component" value="Chromosome 20"/>
</dbReference>
<dbReference type="Bgee" id="ENSDARG00000055365">
    <property type="expression patterns" value="Expressed in granulocyte and 17 other cell types or tissues"/>
</dbReference>
<dbReference type="GO" id="GO:0005737">
    <property type="term" value="C:cytoplasm"/>
    <property type="evidence" value="ECO:0000250"/>
    <property type="project" value="UniProtKB"/>
</dbReference>
<dbReference type="GO" id="GO:0005634">
    <property type="term" value="C:nucleus"/>
    <property type="evidence" value="ECO:0000250"/>
    <property type="project" value="UniProtKB"/>
</dbReference>
<dbReference type="GO" id="GO:0043530">
    <property type="term" value="F:adenosine 5'-monophosphoramidase activity"/>
    <property type="evidence" value="ECO:0000250"/>
    <property type="project" value="UniProtKB"/>
</dbReference>
<dbReference type="GO" id="GO:0000166">
    <property type="term" value="F:nucleotide binding"/>
    <property type="evidence" value="ECO:0007669"/>
    <property type="project" value="UniProtKB-KW"/>
</dbReference>
<dbReference type="Gene3D" id="3.30.428.10">
    <property type="entry name" value="HIT-like"/>
    <property type="match status" value="1"/>
</dbReference>
<dbReference type="InterPro" id="IPR011146">
    <property type="entry name" value="HIT-like"/>
</dbReference>
<dbReference type="InterPro" id="IPR036265">
    <property type="entry name" value="HIT-like_sf"/>
</dbReference>
<dbReference type="PANTHER" id="PTHR12486:SF6">
    <property type="entry name" value="ADENOSINE 5'-MONOPHOSPHORAMIDASE HINT3"/>
    <property type="match status" value="1"/>
</dbReference>
<dbReference type="PANTHER" id="PTHR12486">
    <property type="entry name" value="APRATAXIN-RELATED"/>
    <property type="match status" value="1"/>
</dbReference>
<dbReference type="Pfam" id="PF11969">
    <property type="entry name" value="DcpS_C"/>
    <property type="match status" value="1"/>
</dbReference>
<dbReference type="SUPFAM" id="SSF54197">
    <property type="entry name" value="HIT-like"/>
    <property type="match status" value="1"/>
</dbReference>
<dbReference type="PROSITE" id="PS51084">
    <property type="entry name" value="HIT_2"/>
    <property type="match status" value="1"/>
</dbReference>
<organism>
    <name type="scientific">Danio rerio</name>
    <name type="common">Zebrafish</name>
    <name type="synonym">Brachydanio rerio</name>
    <dbReference type="NCBI Taxonomy" id="7955"/>
    <lineage>
        <taxon>Eukaryota</taxon>
        <taxon>Metazoa</taxon>
        <taxon>Chordata</taxon>
        <taxon>Craniata</taxon>
        <taxon>Vertebrata</taxon>
        <taxon>Euteleostomi</taxon>
        <taxon>Actinopterygii</taxon>
        <taxon>Neopterygii</taxon>
        <taxon>Teleostei</taxon>
        <taxon>Ostariophysi</taxon>
        <taxon>Cypriniformes</taxon>
        <taxon>Danionidae</taxon>
        <taxon>Danioninae</taxon>
        <taxon>Danio</taxon>
    </lineage>
</organism>
<sequence>MCDNSCFCENKQDTIDESLDKTCIFCTIAKGDDRYTEILAEDEDFVCFRDINPGAPHHYLVIPKKHIYSCLSLYADDISLVRGMAEMGRNVLKANNVTDLKDISLGFHVPPYITVPHLHLHVLAPYSQLYKWAINKFRTNWYINEEKTVEILMKGKTQMV</sequence>
<accession>Q5PNN8</accession>
<accession>Q0V966</accession>
<accession>Q1RMA9</accession>
<accession>Q5RGD5</accession>
<comment type="function">
    <text evidence="2">Exhibits adenosine 5'-monophosphoramidase activity, hydrolyzing purine nucleotide phosphoramidates with a single phosphate group such as adenosine 5'monophosphoramidate (AMP-NH2) to yield AMP and NH2 (By similarity). Hydrolyzes lysyl-AMP (AMP-N-epsilon-(N-alpha-acetyl lysine methyl ester)) generated by lysine tRNA ligase (By similarity).</text>
</comment>
<comment type="catalytic activity">
    <reaction evidence="2">
        <text>adenosine 5'-phosphoramidate + H2O = AMP + NH4(+)</text>
        <dbReference type="Rhea" id="RHEA:67916"/>
        <dbReference type="ChEBI" id="CHEBI:15377"/>
        <dbReference type="ChEBI" id="CHEBI:28938"/>
        <dbReference type="ChEBI" id="CHEBI:57890"/>
        <dbReference type="ChEBI" id="CHEBI:456215"/>
    </reaction>
</comment>
<comment type="subunit">
    <text evidence="2">Forms dimers to octamers and even larger oligomer.</text>
</comment>
<comment type="subcellular location">
    <subcellularLocation>
        <location evidence="2">Cytoplasm</location>
    </subcellularLocation>
    <subcellularLocation>
        <location evidence="2">Nucleus</location>
    </subcellularLocation>
</comment>
<comment type="similarity">
    <text evidence="4">Belongs to the HINT family.</text>
</comment>
<proteinExistence type="evidence at transcript level"/>
<reference key="1">
    <citation type="journal article" date="2013" name="Nature">
        <title>The zebrafish reference genome sequence and its relationship to the human genome.</title>
        <authorList>
            <person name="Howe K."/>
            <person name="Clark M.D."/>
            <person name="Torroja C.F."/>
            <person name="Torrance J."/>
            <person name="Berthelot C."/>
            <person name="Muffato M."/>
            <person name="Collins J.E."/>
            <person name="Humphray S."/>
            <person name="McLaren K."/>
            <person name="Matthews L."/>
            <person name="McLaren S."/>
            <person name="Sealy I."/>
            <person name="Caccamo M."/>
            <person name="Churcher C."/>
            <person name="Scott C."/>
            <person name="Barrett J.C."/>
            <person name="Koch R."/>
            <person name="Rauch G.J."/>
            <person name="White S."/>
            <person name="Chow W."/>
            <person name="Kilian B."/>
            <person name="Quintais L.T."/>
            <person name="Guerra-Assuncao J.A."/>
            <person name="Zhou Y."/>
            <person name="Gu Y."/>
            <person name="Yen J."/>
            <person name="Vogel J.H."/>
            <person name="Eyre T."/>
            <person name="Redmond S."/>
            <person name="Banerjee R."/>
            <person name="Chi J."/>
            <person name="Fu B."/>
            <person name="Langley E."/>
            <person name="Maguire S.F."/>
            <person name="Laird G.K."/>
            <person name="Lloyd D."/>
            <person name="Kenyon E."/>
            <person name="Donaldson S."/>
            <person name="Sehra H."/>
            <person name="Almeida-King J."/>
            <person name="Loveland J."/>
            <person name="Trevanion S."/>
            <person name="Jones M."/>
            <person name="Quail M."/>
            <person name="Willey D."/>
            <person name="Hunt A."/>
            <person name="Burton J."/>
            <person name="Sims S."/>
            <person name="McLay K."/>
            <person name="Plumb B."/>
            <person name="Davis J."/>
            <person name="Clee C."/>
            <person name="Oliver K."/>
            <person name="Clark R."/>
            <person name="Riddle C."/>
            <person name="Elliot D."/>
            <person name="Threadgold G."/>
            <person name="Harden G."/>
            <person name="Ware D."/>
            <person name="Begum S."/>
            <person name="Mortimore B."/>
            <person name="Kerry G."/>
            <person name="Heath P."/>
            <person name="Phillimore B."/>
            <person name="Tracey A."/>
            <person name="Corby N."/>
            <person name="Dunn M."/>
            <person name="Johnson C."/>
            <person name="Wood J."/>
            <person name="Clark S."/>
            <person name="Pelan S."/>
            <person name="Griffiths G."/>
            <person name="Smith M."/>
            <person name="Glithero R."/>
            <person name="Howden P."/>
            <person name="Barker N."/>
            <person name="Lloyd C."/>
            <person name="Stevens C."/>
            <person name="Harley J."/>
            <person name="Holt K."/>
            <person name="Panagiotidis G."/>
            <person name="Lovell J."/>
            <person name="Beasley H."/>
            <person name="Henderson C."/>
            <person name="Gordon D."/>
            <person name="Auger K."/>
            <person name="Wright D."/>
            <person name="Collins J."/>
            <person name="Raisen C."/>
            <person name="Dyer L."/>
            <person name="Leung K."/>
            <person name="Robertson L."/>
            <person name="Ambridge K."/>
            <person name="Leongamornlert D."/>
            <person name="McGuire S."/>
            <person name="Gilderthorp R."/>
            <person name="Griffiths C."/>
            <person name="Manthravadi D."/>
            <person name="Nichol S."/>
            <person name="Barker G."/>
            <person name="Whitehead S."/>
            <person name="Kay M."/>
            <person name="Brown J."/>
            <person name="Murnane C."/>
            <person name="Gray E."/>
            <person name="Humphries M."/>
            <person name="Sycamore N."/>
            <person name="Barker D."/>
            <person name="Saunders D."/>
            <person name="Wallis J."/>
            <person name="Babbage A."/>
            <person name="Hammond S."/>
            <person name="Mashreghi-Mohammadi M."/>
            <person name="Barr L."/>
            <person name="Martin S."/>
            <person name="Wray P."/>
            <person name="Ellington A."/>
            <person name="Matthews N."/>
            <person name="Ellwood M."/>
            <person name="Woodmansey R."/>
            <person name="Clark G."/>
            <person name="Cooper J."/>
            <person name="Tromans A."/>
            <person name="Grafham D."/>
            <person name="Skuce C."/>
            <person name="Pandian R."/>
            <person name="Andrews R."/>
            <person name="Harrison E."/>
            <person name="Kimberley A."/>
            <person name="Garnett J."/>
            <person name="Fosker N."/>
            <person name="Hall R."/>
            <person name="Garner P."/>
            <person name="Kelly D."/>
            <person name="Bird C."/>
            <person name="Palmer S."/>
            <person name="Gehring I."/>
            <person name="Berger A."/>
            <person name="Dooley C.M."/>
            <person name="Ersan-Urun Z."/>
            <person name="Eser C."/>
            <person name="Geiger H."/>
            <person name="Geisler M."/>
            <person name="Karotki L."/>
            <person name="Kirn A."/>
            <person name="Konantz J."/>
            <person name="Konantz M."/>
            <person name="Oberlander M."/>
            <person name="Rudolph-Geiger S."/>
            <person name="Teucke M."/>
            <person name="Lanz C."/>
            <person name="Raddatz G."/>
            <person name="Osoegawa K."/>
            <person name="Zhu B."/>
            <person name="Rapp A."/>
            <person name="Widaa S."/>
            <person name="Langford C."/>
            <person name="Yang F."/>
            <person name="Schuster S.C."/>
            <person name="Carter N.P."/>
            <person name="Harrow J."/>
            <person name="Ning Z."/>
            <person name="Herrero J."/>
            <person name="Searle S.M."/>
            <person name="Enright A."/>
            <person name="Geisler R."/>
            <person name="Plasterk R.H."/>
            <person name="Lee C."/>
            <person name="Westerfield M."/>
            <person name="de Jong P.J."/>
            <person name="Zon L.I."/>
            <person name="Postlethwait J.H."/>
            <person name="Nusslein-Volhard C."/>
            <person name="Hubbard T.J."/>
            <person name="Roest Crollius H."/>
            <person name="Rogers J."/>
            <person name="Stemple D.L."/>
        </authorList>
    </citation>
    <scope>NUCLEOTIDE SEQUENCE [LARGE SCALE GENOMIC DNA]</scope>
    <source>
        <strain>Tuebingen</strain>
    </source>
</reference>
<reference key="2">
    <citation type="submission" date="2007-03" db="EMBL/GenBank/DDBJ databases">
        <authorList>
            <consortium name="NIH - Zebrafish Gene Collection (ZGC) project"/>
        </authorList>
    </citation>
    <scope>NUCLEOTIDE SEQUENCE [LARGE SCALE MRNA]</scope>
    <source>
        <tissue>Intestine</tissue>
        <tissue>Olfactory epithelium</tissue>
    </source>
</reference>
<protein>
    <recommendedName>
        <fullName evidence="2">Adenosine 5'-monophosphoramidase HINT3</fullName>
        <ecNumber evidence="2">3.9.1.-</ecNumber>
    </recommendedName>
    <alternativeName>
        <fullName>Histidine triad nucleotide-binding protein 3</fullName>
        <shortName>HINT-3</shortName>
    </alternativeName>
</protein>
<evidence type="ECO:0000250" key="1">
    <source>
        <dbReference type="UniProtKB" id="P49773"/>
    </source>
</evidence>
<evidence type="ECO:0000250" key="2">
    <source>
        <dbReference type="UniProtKB" id="Q9NQE9"/>
    </source>
</evidence>
<evidence type="ECO:0000255" key="3">
    <source>
        <dbReference type="PROSITE-ProRule" id="PRU00464"/>
    </source>
</evidence>
<evidence type="ECO:0000305" key="4"/>
<gene>
    <name type="primary">hint3</name>
    <name type="ORF">si:dkey-25e12.3</name>
</gene>